<gene>
    <name type="ordered locus">SSP1806</name>
</gene>
<proteinExistence type="inferred from homology"/>
<accession>Q49WA8</accession>
<keyword id="KW-0479">Metal-binding</keyword>
<keyword id="KW-1185">Reference proteome</keyword>
<name>Y1806_STAS1</name>
<comment type="similarity">
    <text evidence="2">Belongs to the FAH family.</text>
</comment>
<dbReference type="EMBL" id="AP008934">
    <property type="protein sequence ID" value="BAE18951.1"/>
    <property type="molecule type" value="Genomic_DNA"/>
</dbReference>
<dbReference type="RefSeq" id="WP_011303501.1">
    <property type="nucleotide sequence ID" value="NZ_MTGA01000039.1"/>
</dbReference>
<dbReference type="SMR" id="Q49WA8"/>
<dbReference type="GeneID" id="3616461"/>
<dbReference type="KEGG" id="ssp:SSP1806"/>
<dbReference type="PATRIC" id="fig|342451.11.peg.1802"/>
<dbReference type="eggNOG" id="COG0179">
    <property type="taxonomic scope" value="Bacteria"/>
</dbReference>
<dbReference type="HOGENOM" id="CLU_028458_3_1_9"/>
<dbReference type="OrthoDB" id="9805307at2"/>
<dbReference type="Proteomes" id="UP000006371">
    <property type="component" value="Chromosome"/>
</dbReference>
<dbReference type="GO" id="GO:0018773">
    <property type="term" value="F:acetylpyruvate hydrolase activity"/>
    <property type="evidence" value="ECO:0007669"/>
    <property type="project" value="TreeGrafter"/>
</dbReference>
<dbReference type="GO" id="GO:0046872">
    <property type="term" value="F:metal ion binding"/>
    <property type="evidence" value="ECO:0007669"/>
    <property type="project" value="UniProtKB-KW"/>
</dbReference>
<dbReference type="FunFam" id="3.90.850.10:FF:000010">
    <property type="entry name" value="FAA hydrolase family protein"/>
    <property type="match status" value="1"/>
</dbReference>
<dbReference type="Gene3D" id="3.90.850.10">
    <property type="entry name" value="Fumarylacetoacetase-like, C-terminal domain"/>
    <property type="match status" value="1"/>
</dbReference>
<dbReference type="InterPro" id="IPR011234">
    <property type="entry name" value="Fumarylacetoacetase-like_C"/>
</dbReference>
<dbReference type="InterPro" id="IPR036663">
    <property type="entry name" value="Fumarylacetoacetase_C_sf"/>
</dbReference>
<dbReference type="PANTHER" id="PTHR11820">
    <property type="entry name" value="ACYLPYRUVASE"/>
    <property type="match status" value="1"/>
</dbReference>
<dbReference type="PANTHER" id="PTHR11820:SF7">
    <property type="entry name" value="ACYLPYRUVASE FAHD1, MITOCHONDRIAL"/>
    <property type="match status" value="1"/>
</dbReference>
<dbReference type="Pfam" id="PF01557">
    <property type="entry name" value="FAA_hydrolase"/>
    <property type="match status" value="1"/>
</dbReference>
<dbReference type="SUPFAM" id="SSF56529">
    <property type="entry name" value="FAH"/>
    <property type="match status" value="1"/>
</dbReference>
<protein>
    <recommendedName>
        <fullName>Uncharacterized protein SSP1806</fullName>
    </recommendedName>
</protein>
<sequence>MKFLSFRHEGQTSYGVKVKREEAAWDLKKVFADFAEGSFHPKTLLNGLQQNQVVDFQEQVRKAVVAAEDSGKGEDYKVQFSDIEFLPPVTPTNNVIAFGRNYQDHANELNHEVQRLYVFTKAASSLTGDNSTIPNHKDITDQLDYEGELGIVIGKSGEKIPKGLALDYVYGYTIINDITDRKAQNAQDQAFLSKSLTGGCPVGPYIVTKDELPTPEDVNIVTKVNNDIRQDGNTGQMILKIDELIEEISKYVALHPGDIIATGTPAGVGAGMNPPQFLQPGDEIKVTIDNIGTLTNFIADK</sequence>
<organism>
    <name type="scientific">Staphylococcus saprophyticus subsp. saprophyticus (strain ATCC 15305 / DSM 20229 / NCIMB 8711 / NCTC 7292 / S-41)</name>
    <dbReference type="NCBI Taxonomy" id="342451"/>
    <lineage>
        <taxon>Bacteria</taxon>
        <taxon>Bacillati</taxon>
        <taxon>Bacillota</taxon>
        <taxon>Bacilli</taxon>
        <taxon>Bacillales</taxon>
        <taxon>Staphylococcaceae</taxon>
        <taxon>Staphylococcus</taxon>
    </lineage>
</organism>
<feature type="chain" id="PRO_0000303229" description="Uncharacterized protein SSP1806">
    <location>
        <begin position="1"/>
        <end position="301"/>
    </location>
</feature>
<feature type="binding site" evidence="1">
    <location>
        <position position="146"/>
    </location>
    <ligand>
        <name>a divalent metal cation</name>
        <dbReference type="ChEBI" id="CHEBI:60240"/>
    </ligand>
</feature>
<feature type="binding site" evidence="1">
    <location>
        <position position="148"/>
    </location>
    <ligand>
        <name>a divalent metal cation</name>
        <dbReference type="ChEBI" id="CHEBI:60240"/>
    </ligand>
</feature>
<feature type="binding site" evidence="1">
    <location>
        <position position="177"/>
    </location>
    <ligand>
        <name>a divalent metal cation</name>
        <dbReference type="ChEBI" id="CHEBI:60240"/>
    </ligand>
</feature>
<evidence type="ECO:0000250" key="1"/>
<evidence type="ECO:0000305" key="2"/>
<reference key="1">
    <citation type="journal article" date="2005" name="Proc. Natl. Acad. Sci. U.S.A.">
        <title>Whole genome sequence of Staphylococcus saprophyticus reveals the pathogenesis of uncomplicated urinary tract infection.</title>
        <authorList>
            <person name="Kuroda M."/>
            <person name="Yamashita A."/>
            <person name="Hirakawa H."/>
            <person name="Kumano M."/>
            <person name="Morikawa K."/>
            <person name="Higashide M."/>
            <person name="Maruyama A."/>
            <person name="Inose Y."/>
            <person name="Matoba K."/>
            <person name="Toh H."/>
            <person name="Kuhara S."/>
            <person name="Hattori M."/>
            <person name="Ohta T."/>
        </authorList>
    </citation>
    <scope>NUCLEOTIDE SEQUENCE [LARGE SCALE GENOMIC DNA]</scope>
    <source>
        <strain>ATCC 15305 / DSM 20229 / NCIMB 8711 / NCTC 7292 / S-41</strain>
    </source>
</reference>